<comment type="function">
    <text evidence="1">Tetrapolymerization of the monopyrrole PBG into the hydroxymethylbilane pre-uroporphyrinogen in several discrete steps.</text>
</comment>
<comment type="catalytic activity">
    <reaction evidence="1">
        <text>4 porphobilinogen + H2O = hydroxymethylbilane + 4 NH4(+)</text>
        <dbReference type="Rhea" id="RHEA:13185"/>
        <dbReference type="ChEBI" id="CHEBI:15377"/>
        <dbReference type="ChEBI" id="CHEBI:28938"/>
        <dbReference type="ChEBI" id="CHEBI:57845"/>
        <dbReference type="ChEBI" id="CHEBI:58126"/>
        <dbReference type="EC" id="2.5.1.61"/>
    </reaction>
</comment>
<comment type="cofactor">
    <cofactor evidence="1">
        <name>dipyrromethane</name>
        <dbReference type="ChEBI" id="CHEBI:60342"/>
    </cofactor>
    <text evidence="1">Binds 1 dipyrromethane group covalently.</text>
</comment>
<comment type="pathway">
    <text evidence="1">Porphyrin-containing compound metabolism; protoporphyrin-IX biosynthesis; coproporphyrinogen-III from 5-aminolevulinate: step 2/4.</text>
</comment>
<comment type="subunit">
    <text evidence="1">Monomer.</text>
</comment>
<comment type="miscellaneous">
    <text evidence="1">The porphobilinogen subunits are added to the dipyrromethane group.</text>
</comment>
<comment type="similarity">
    <text evidence="1">Belongs to the HMBS family.</text>
</comment>
<dbReference type="EC" id="2.5.1.61" evidence="1"/>
<dbReference type="EMBL" id="CP000851">
    <property type="protein sequence ID" value="ABV85701.1"/>
    <property type="molecule type" value="Genomic_DNA"/>
</dbReference>
<dbReference type="RefSeq" id="WP_012153642.1">
    <property type="nucleotide sequence ID" value="NC_009901.1"/>
</dbReference>
<dbReference type="SMR" id="A8GZG4"/>
<dbReference type="STRING" id="398579.Spea_0373"/>
<dbReference type="KEGG" id="spl:Spea_0373"/>
<dbReference type="eggNOG" id="COG0181">
    <property type="taxonomic scope" value="Bacteria"/>
</dbReference>
<dbReference type="HOGENOM" id="CLU_019704_0_2_6"/>
<dbReference type="OrthoDB" id="9810298at2"/>
<dbReference type="UniPathway" id="UPA00251">
    <property type="reaction ID" value="UER00319"/>
</dbReference>
<dbReference type="Proteomes" id="UP000002608">
    <property type="component" value="Chromosome"/>
</dbReference>
<dbReference type="GO" id="GO:0005737">
    <property type="term" value="C:cytoplasm"/>
    <property type="evidence" value="ECO:0007669"/>
    <property type="project" value="TreeGrafter"/>
</dbReference>
<dbReference type="GO" id="GO:0004418">
    <property type="term" value="F:hydroxymethylbilane synthase activity"/>
    <property type="evidence" value="ECO:0007669"/>
    <property type="project" value="UniProtKB-UniRule"/>
</dbReference>
<dbReference type="GO" id="GO:0006782">
    <property type="term" value="P:protoporphyrinogen IX biosynthetic process"/>
    <property type="evidence" value="ECO:0007669"/>
    <property type="project" value="UniProtKB-UniRule"/>
</dbReference>
<dbReference type="CDD" id="cd13646">
    <property type="entry name" value="PBP2_EcHMBS_like"/>
    <property type="match status" value="1"/>
</dbReference>
<dbReference type="FunFam" id="3.30.160.40:FF:000002">
    <property type="entry name" value="Porphobilinogen deaminase"/>
    <property type="match status" value="1"/>
</dbReference>
<dbReference type="FunFam" id="3.40.190.10:FF:000004">
    <property type="entry name" value="Porphobilinogen deaminase"/>
    <property type="match status" value="1"/>
</dbReference>
<dbReference type="FunFam" id="3.40.190.10:FF:000005">
    <property type="entry name" value="Porphobilinogen deaminase"/>
    <property type="match status" value="1"/>
</dbReference>
<dbReference type="Gene3D" id="3.40.190.10">
    <property type="entry name" value="Periplasmic binding protein-like II"/>
    <property type="match status" value="2"/>
</dbReference>
<dbReference type="Gene3D" id="3.30.160.40">
    <property type="entry name" value="Porphobilinogen deaminase, C-terminal domain"/>
    <property type="match status" value="1"/>
</dbReference>
<dbReference type="HAMAP" id="MF_00260">
    <property type="entry name" value="Porphobil_deam"/>
    <property type="match status" value="1"/>
</dbReference>
<dbReference type="InterPro" id="IPR000860">
    <property type="entry name" value="HemC"/>
</dbReference>
<dbReference type="InterPro" id="IPR022419">
    <property type="entry name" value="Porphobilin_deaminase_cofac_BS"/>
</dbReference>
<dbReference type="InterPro" id="IPR022417">
    <property type="entry name" value="Porphobilin_deaminase_N"/>
</dbReference>
<dbReference type="InterPro" id="IPR022418">
    <property type="entry name" value="Porphobilinogen_deaminase_C"/>
</dbReference>
<dbReference type="InterPro" id="IPR036803">
    <property type="entry name" value="Porphobilinogen_deaminase_C_sf"/>
</dbReference>
<dbReference type="NCBIfam" id="TIGR00212">
    <property type="entry name" value="hemC"/>
    <property type="match status" value="1"/>
</dbReference>
<dbReference type="PANTHER" id="PTHR11557">
    <property type="entry name" value="PORPHOBILINOGEN DEAMINASE"/>
    <property type="match status" value="1"/>
</dbReference>
<dbReference type="PANTHER" id="PTHR11557:SF0">
    <property type="entry name" value="PORPHOBILINOGEN DEAMINASE"/>
    <property type="match status" value="1"/>
</dbReference>
<dbReference type="Pfam" id="PF01379">
    <property type="entry name" value="Porphobil_deam"/>
    <property type="match status" value="1"/>
</dbReference>
<dbReference type="Pfam" id="PF03900">
    <property type="entry name" value="Porphobil_deamC"/>
    <property type="match status" value="1"/>
</dbReference>
<dbReference type="PIRSF" id="PIRSF001438">
    <property type="entry name" value="4pyrrol_synth_OHMeBilane_synth"/>
    <property type="match status" value="1"/>
</dbReference>
<dbReference type="PRINTS" id="PR00151">
    <property type="entry name" value="PORPHBDMNASE"/>
</dbReference>
<dbReference type="SUPFAM" id="SSF53850">
    <property type="entry name" value="Periplasmic binding protein-like II"/>
    <property type="match status" value="1"/>
</dbReference>
<dbReference type="SUPFAM" id="SSF54782">
    <property type="entry name" value="Porphobilinogen deaminase (hydroxymethylbilane synthase), C-terminal domain"/>
    <property type="match status" value="1"/>
</dbReference>
<dbReference type="PROSITE" id="PS00533">
    <property type="entry name" value="PORPHOBILINOGEN_DEAM"/>
    <property type="match status" value="1"/>
</dbReference>
<evidence type="ECO:0000255" key="1">
    <source>
        <dbReference type="HAMAP-Rule" id="MF_00260"/>
    </source>
</evidence>
<feature type="chain" id="PRO_1000078623" description="Porphobilinogen deaminase">
    <location>
        <begin position="1"/>
        <end position="310"/>
    </location>
</feature>
<feature type="modified residue" description="S-(dipyrrolylmethanemethyl)cysteine" evidence="1">
    <location>
        <position position="242"/>
    </location>
</feature>
<sequence length="310" mass="33070">MSQNLIRIATRKSPLAMWQAEFVKAELEKIHEGLTVELLPMSTKGDIILDTPLAKVGGKGLFVKELEVAMLEGLADIAVHSMKDVPVDFPEGLGLEVICEREDPRDAFVSNTYKTIEDLPQGAVVGTSSLRRQCQIRAARPDLVIKDLRGNVGTRLAKLDAGNYDAIILAAAGLKRLKLEERIASFISAEQSLPANGQGAVGIECRTDDARVKALLAPLEHAETRMRVTAERAMNTRLEGGCQVPIGAYAEIDGDTLSLRGLVGNPDGSQIITASSSGSTADAEKLGVALAEELLSKGAKTILDAVYANA</sequence>
<keyword id="KW-0627">Porphyrin biosynthesis</keyword>
<keyword id="KW-1185">Reference proteome</keyword>
<keyword id="KW-0808">Transferase</keyword>
<reference key="1">
    <citation type="submission" date="2007-10" db="EMBL/GenBank/DDBJ databases">
        <title>Complete sequence of Shewanella pealeana ATCC 700345.</title>
        <authorList>
            <consortium name="US DOE Joint Genome Institute"/>
            <person name="Copeland A."/>
            <person name="Lucas S."/>
            <person name="Lapidus A."/>
            <person name="Barry K."/>
            <person name="Glavina del Rio T."/>
            <person name="Dalin E."/>
            <person name="Tice H."/>
            <person name="Pitluck S."/>
            <person name="Chertkov O."/>
            <person name="Brettin T."/>
            <person name="Bruce D."/>
            <person name="Detter J.C."/>
            <person name="Han C."/>
            <person name="Schmutz J."/>
            <person name="Larimer F."/>
            <person name="Land M."/>
            <person name="Hauser L."/>
            <person name="Kyrpides N."/>
            <person name="Kim E."/>
            <person name="Zhao J.-S.Z."/>
            <person name="Manno D."/>
            <person name="Hawari J."/>
            <person name="Richardson P."/>
        </authorList>
    </citation>
    <scope>NUCLEOTIDE SEQUENCE [LARGE SCALE GENOMIC DNA]</scope>
    <source>
        <strain>ATCC 700345 / ANG-SQ1</strain>
    </source>
</reference>
<protein>
    <recommendedName>
        <fullName evidence="1">Porphobilinogen deaminase</fullName>
        <shortName evidence="1">PBG</shortName>
        <ecNumber evidence="1">2.5.1.61</ecNumber>
    </recommendedName>
    <alternativeName>
        <fullName evidence="1">Hydroxymethylbilane synthase</fullName>
        <shortName evidence="1">HMBS</shortName>
    </alternativeName>
    <alternativeName>
        <fullName evidence="1">Pre-uroporphyrinogen synthase</fullName>
    </alternativeName>
</protein>
<name>HEM3_SHEPA</name>
<accession>A8GZG4</accession>
<organism>
    <name type="scientific">Shewanella pealeana (strain ATCC 700345 / ANG-SQ1)</name>
    <dbReference type="NCBI Taxonomy" id="398579"/>
    <lineage>
        <taxon>Bacteria</taxon>
        <taxon>Pseudomonadati</taxon>
        <taxon>Pseudomonadota</taxon>
        <taxon>Gammaproteobacteria</taxon>
        <taxon>Alteromonadales</taxon>
        <taxon>Shewanellaceae</taxon>
        <taxon>Shewanella</taxon>
    </lineage>
</organism>
<proteinExistence type="inferred from homology"/>
<gene>
    <name evidence="1" type="primary">hemC</name>
    <name type="ordered locus">Spea_0373</name>
</gene>